<sequence>MLTYETWEENDVSFSEEDETKGALSALSWAYKEYKSEIVYACSFGVEGMVLLHLINQVNPSAKVVFLDTNVHFQETYELIQKVRERFPSLNIIEKQPKLTLDEQANLHGNKLWESNPNLCCNIRKILPLEESLANEKAWISGLRREQSETRKHTKFINQDHRFQSIKVCPLIHWTWKEVWRYVYKHSLPYNPLHDIGYPSIGCEKCTLPVGEGGDSRDGRWAGKVKTECGLHYQ</sequence>
<reference key="1">
    <citation type="journal article" date="2009" name="J. Bacteriol.">
        <title>Complete genome sequence of the extremophilic Bacillus cereus strain Q1 with industrial applications.</title>
        <authorList>
            <person name="Xiong Z."/>
            <person name="Jiang Y."/>
            <person name="Qi D."/>
            <person name="Lu H."/>
            <person name="Yang F."/>
            <person name="Yang J."/>
            <person name="Chen L."/>
            <person name="Sun L."/>
            <person name="Xu X."/>
            <person name="Xue Y."/>
            <person name="Zhu Y."/>
            <person name="Jin Q."/>
        </authorList>
    </citation>
    <scope>NUCLEOTIDE SEQUENCE [LARGE SCALE GENOMIC DNA]</scope>
    <source>
        <strain>Q1</strain>
    </source>
</reference>
<comment type="function">
    <text evidence="1">Catalyzes the formation of sulfite from adenosine 5'-phosphosulfate (APS) using thioredoxin as an electron donor.</text>
</comment>
<comment type="catalytic activity">
    <reaction evidence="1">
        <text>[thioredoxin]-disulfide + sulfite + AMP + 2 H(+) = adenosine 5'-phosphosulfate + [thioredoxin]-dithiol</text>
        <dbReference type="Rhea" id="RHEA:21976"/>
        <dbReference type="Rhea" id="RHEA-COMP:10698"/>
        <dbReference type="Rhea" id="RHEA-COMP:10700"/>
        <dbReference type="ChEBI" id="CHEBI:15378"/>
        <dbReference type="ChEBI" id="CHEBI:17359"/>
        <dbReference type="ChEBI" id="CHEBI:29950"/>
        <dbReference type="ChEBI" id="CHEBI:50058"/>
        <dbReference type="ChEBI" id="CHEBI:58243"/>
        <dbReference type="ChEBI" id="CHEBI:456215"/>
        <dbReference type="EC" id="1.8.4.10"/>
    </reaction>
</comment>
<comment type="cofactor">
    <cofactor evidence="1">
        <name>[4Fe-4S] cluster</name>
        <dbReference type="ChEBI" id="CHEBI:49883"/>
    </cofactor>
    <text evidence="1">Binds 1 [4Fe-4S] cluster per subunit.</text>
</comment>
<comment type="pathway">
    <text evidence="1">Sulfur metabolism; hydrogen sulfide biosynthesis; sulfite from sulfate.</text>
</comment>
<comment type="subcellular location">
    <subcellularLocation>
        <location evidence="1">Cytoplasm</location>
    </subcellularLocation>
</comment>
<comment type="similarity">
    <text evidence="1">Belongs to the PAPS reductase family. CysH subfamily.</text>
</comment>
<evidence type="ECO:0000255" key="1">
    <source>
        <dbReference type="HAMAP-Rule" id="MF_00063"/>
    </source>
</evidence>
<keyword id="KW-0963">Cytoplasm</keyword>
<keyword id="KW-0408">Iron</keyword>
<keyword id="KW-0411">Iron-sulfur</keyword>
<keyword id="KW-0479">Metal-binding</keyword>
<keyword id="KW-0560">Oxidoreductase</keyword>
<feature type="chain" id="PRO_1000117924" description="Adenosine 5'-phosphosulfate reductase">
    <location>
        <begin position="1"/>
        <end position="234"/>
    </location>
</feature>
<feature type="active site" description="Nucleophile; cysteine thiosulfonate intermediate" evidence="1">
    <location>
        <position position="229"/>
    </location>
</feature>
<feature type="binding site" evidence="1">
    <location>
        <position position="120"/>
    </location>
    <ligand>
        <name>[4Fe-4S] cluster</name>
        <dbReference type="ChEBI" id="CHEBI:49883"/>
    </ligand>
</feature>
<feature type="binding site" evidence="1">
    <location>
        <position position="121"/>
    </location>
    <ligand>
        <name>[4Fe-4S] cluster</name>
        <dbReference type="ChEBI" id="CHEBI:49883"/>
    </ligand>
</feature>
<feature type="binding site" evidence="1">
    <location>
        <position position="203"/>
    </location>
    <ligand>
        <name>[4Fe-4S] cluster</name>
        <dbReference type="ChEBI" id="CHEBI:49883"/>
    </ligand>
</feature>
<feature type="binding site" evidence="1">
    <location>
        <position position="206"/>
    </location>
    <ligand>
        <name>[4Fe-4S] cluster</name>
        <dbReference type="ChEBI" id="CHEBI:49883"/>
    </ligand>
</feature>
<organism>
    <name type="scientific">Bacillus cereus (strain Q1)</name>
    <dbReference type="NCBI Taxonomy" id="361100"/>
    <lineage>
        <taxon>Bacteria</taxon>
        <taxon>Bacillati</taxon>
        <taxon>Bacillota</taxon>
        <taxon>Bacilli</taxon>
        <taxon>Bacillales</taxon>
        <taxon>Bacillaceae</taxon>
        <taxon>Bacillus</taxon>
        <taxon>Bacillus cereus group</taxon>
    </lineage>
</organism>
<protein>
    <recommendedName>
        <fullName evidence="1">Adenosine 5'-phosphosulfate reductase</fullName>
        <shortName evidence="1">APS reductase</shortName>
        <ecNumber evidence="1">1.8.4.10</ecNumber>
    </recommendedName>
    <alternativeName>
        <fullName evidence="1">5'-adenylylsulfate reductase</fullName>
    </alternativeName>
    <alternativeName>
        <fullName evidence="1">Thioredoxin-dependent 5'-adenylylsulfate reductase</fullName>
    </alternativeName>
</protein>
<accession>B9IV11</accession>
<proteinExistence type="inferred from homology"/>
<name>CYSH_BACCQ</name>
<gene>
    <name evidence="1" type="primary">cysH</name>
    <name type="ordered locus">BCQ_1494</name>
</gene>
<dbReference type="EC" id="1.8.4.10" evidence="1"/>
<dbReference type="EMBL" id="CP000227">
    <property type="protein sequence ID" value="ACM11922.1"/>
    <property type="molecule type" value="Genomic_DNA"/>
</dbReference>
<dbReference type="SMR" id="B9IV11"/>
<dbReference type="KEGG" id="bcq:BCQ_1494"/>
<dbReference type="HOGENOM" id="CLU_044089_2_1_9"/>
<dbReference type="Proteomes" id="UP000000441">
    <property type="component" value="Chromosome"/>
</dbReference>
<dbReference type="GO" id="GO:0005737">
    <property type="term" value="C:cytoplasm"/>
    <property type="evidence" value="ECO:0007669"/>
    <property type="project" value="UniProtKB-SubCell"/>
</dbReference>
<dbReference type="GO" id="GO:0051539">
    <property type="term" value="F:4 iron, 4 sulfur cluster binding"/>
    <property type="evidence" value="ECO:0007669"/>
    <property type="project" value="UniProtKB-UniRule"/>
</dbReference>
<dbReference type="GO" id="GO:0043866">
    <property type="term" value="F:adenylyl-sulfate reductase (thioredoxin) activity"/>
    <property type="evidence" value="ECO:0007669"/>
    <property type="project" value="UniProtKB-EC"/>
</dbReference>
<dbReference type="GO" id="GO:0046872">
    <property type="term" value="F:metal ion binding"/>
    <property type="evidence" value="ECO:0007669"/>
    <property type="project" value="UniProtKB-KW"/>
</dbReference>
<dbReference type="GO" id="GO:0004604">
    <property type="term" value="F:phosphoadenylyl-sulfate reductase (thioredoxin) activity"/>
    <property type="evidence" value="ECO:0007669"/>
    <property type="project" value="UniProtKB-UniRule"/>
</dbReference>
<dbReference type="GO" id="GO:0019344">
    <property type="term" value="P:cysteine biosynthetic process"/>
    <property type="evidence" value="ECO:0007669"/>
    <property type="project" value="InterPro"/>
</dbReference>
<dbReference type="GO" id="GO:0070814">
    <property type="term" value="P:hydrogen sulfide biosynthetic process"/>
    <property type="evidence" value="ECO:0007669"/>
    <property type="project" value="UniProtKB-UniRule"/>
</dbReference>
<dbReference type="GO" id="GO:0019379">
    <property type="term" value="P:sulfate assimilation, phosphoadenylyl sulfate reduction by phosphoadenylyl-sulfate reductase (thioredoxin)"/>
    <property type="evidence" value="ECO:0007669"/>
    <property type="project" value="UniProtKB-UniRule"/>
</dbReference>
<dbReference type="CDD" id="cd23945">
    <property type="entry name" value="PAPS_reductase"/>
    <property type="match status" value="1"/>
</dbReference>
<dbReference type="FunFam" id="3.40.50.620:FF:000095">
    <property type="entry name" value="Phosphoadenosine phosphosulfate reductase"/>
    <property type="match status" value="1"/>
</dbReference>
<dbReference type="Gene3D" id="3.40.50.620">
    <property type="entry name" value="HUPs"/>
    <property type="match status" value="1"/>
</dbReference>
<dbReference type="HAMAP" id="MF_00063">
    <property type="entry name" value="CysH"/>
    <property type="match status" value="1"/>
</dbReference>
<dbReference type="InterPro" id="IPR011798">
    <property type="entry name" value="APS_reductase"/>
</dbReference>
<dbReference type="InterPro" id="IPR004511">
    <property type="entry name" value="PAPS/APS_Rdtase"/>
</dbReference>
<dbReference type="InterPro" id="IPR002500">
    <property type="entry name" value="PAPS_reduct_dom"/>
</dbReference>
<dbReference type="InterPro" id="IPR014729">
    <property type="entry name" value="Rossmann-like_a/b/a_fold"/>
</dbReference>
<dbReference type="NCBIfam" id="TIGR02055">
    <property type="entry name" value="APS_reductase"/>
    <property type="match status" value="1"/>
</dbReference>
<dbReference type="NCBIfam" id="TIGR00434">
    <property type="entry name" value="cysH"/>
    <property type="match status" value="1"/>
</dbReference>
<dbReference type="NCBIfam" id="NF002537">
    <property type="entry name" value="PRK02090.1"/>
    <property type="match status" value="1"/>
</dbReference>
<dbReference type="PANTHER" id="PTHR46509">
    <property type="entry name" value="PHOSPHOADENOSINE PHOSPHOSULFATE REDUCTASE"/>
    <property type="match status" value="1"/>
</dbReference>
<dbReference type="PANTHER" id="PTHR46509:SF1">
    <property type="entry name" value="PHOSPHOADENOSINE PHOSPHOSULFATE REDUCTASE"/>
    <property type="match status" value="1"/>
</dbReference>
<dbReference type="Pfam" id="PF01507">
    <property type="entry name" value="PAPS_reduct"/>
    <property type="match status" value="1"/>
</dbReference>
<dbReference type="PIRSF" id="PIRSF000857">
    <property type="entry name" value="PAPS_reductase"/>
    <property type="match status" value="1"/>
</dbReference>
<dbReference type="SUPFAM" id="SSF52402">
    <property type="entry name" value="Adenine nucleotide alpha hydrolases-like"/>
    <property type="match status" value="1"/>
</dbReference>